<keyword id="KW-0025">Alternative splicing</keyword>
<keyword id="KW-0963">Cytoplasm</keyword>
<keyword id="KW-0217">Developmental protein</keyword>
<keyword id="KW-1185">Reference proteome</keyword>
<keyword id="KW-0879">Wnt signaling pathway</keyword>
<evidence type="ECO:0000255" key="1">
    <source>
        <dbReference type="PROSITE-ProRule" id="PRU00066"/>
    </source>
</evidence>
<evidence type="ECO:0000255" key="2">
    <source>
        <dbReference type="PROSITE-ProRule" id="PRU00069"/>
    </source>
</evidence>
<evidence type="ECO:0000255" key="3">
    <source>
        <dbReference type="PROSITE-ProRule" id="PRU00143"/>
    </source>
</evidence>
<evidence type="ECO:0000256" key="4">
    <source>
        <dbReference type="SAM" id="MobiDB-lite"/>
    </source>
</evidence>
<evidence type="ECO:0000269" key="5">
    <source>
    </source>
</evidence>
<evidence type="ECO:0000303" key="6">
    <source>
    </source>
</evidence>
<evidence type="ECO:0000305" key="7"/>
<evidence type="ECO:0000305" key="8">
    <source>
    </source>
</evidence>
<accession>P54792</accession>
<reference key="1">
    <citation type="journal article" date="1996" name="Am. J. Hum. Genet.">
        <title>Human homologue sequences to the Drosophila dishevelled segment-polarity gene are deleted in the DiGeorge syndrome.</title>
        <authorList>
            <person name="Pizzuti A."/>
            <person name="Novelli G."/>
            <person name="Mari A."/>
            <person name="Ratti A."/>
            <person name="Colosimo A."/>
            <person name="Amati F."/>
            <person name="Penso D."/>
            <person name="Sangiuolo F."/>
            <person name="Calabrese G."/>
            <person name="Palka G."/>
            <person name="Silani V."/>
            <person name="Gennarelli M."/>
            <person name="Mingarelli R."/>
            <person name="Scarlato G."/>
            <person name="Scambler P."/>
            <person name="Dallapiccola B."/>
        </authorList>
    </citation>
    <scope>NUCLEOTIDE SEQUENCE [MRNA] (ISOFORMS LONG AND SHORT)</scope>
    <scope>PUTATIVE INVOLVEMENT IN DIGEORGE SYNDROME</scope>
    <scope>TISSUE SPECIFICITY</scope>
    <source>
        <tissue>Brain</tissue>
        <tissue>Sympathetic ganglion</tissue>
    </source>
</reference>
<name>DVLP1_HUMAN</name>
<protein>
    <recommendedName>
        <fullName>Putative segment polarity protein dishevelled homolog DVL1P1</fullName>
    </recommendedName>
    <alternativeName>
        <fullName>DSH homolog 1-like</fullName>
    </alternativeName>
    <alternativeName>
        <fullName>Segment polarity protein dishevelled homolog DVL-1-like</fullName>
        <shortName>Dishevelled-1-like</shortName>
    </alternativeName>
</protein>
<sequence length="670" mass="73254">MAETKIIYHMDEEETPYLVKLPVAPERVTLADFKNVLSNRPVHAYKFFFKSMDQDFGVVKEEIFDDNAKLPCFNGRVVSWLVLVEGAHSDAGSQGTDSHTDLPPPLERTGGIGDSRSPSFQPDVASSRDGMDNETGTESMVSHRRDRARRRNREEAARTNGHPRGDRRRDVGLPPDSASTALSSELESSSFVDSDEDDSTSRLSSSTEQSTSSRLIRKHKRRRRKQRLRQADRASSFSSMTDSTMSLNIITVTLNMERHHFLGICIVGQSNDRGDGGIYIGSIMKGGAVAADGRIEPGDMLLQVNDVNFENMSNDDAVRVLREIVSQTGPISLTVAKCWDPTPRSYFTVPRPDPVRPIDPAAWLSHTAALTGALPRPQLEEAPLTVESDMNTVVRVMQLPDSGLEIRDRMWLKITIANAVIGADVVDWLYTHVEGFKERREARKYASSLLKHGFLRHTVNKITFSEQCYYVFGDLCSNLATLNLNSGSSGTSDQDTLAPLPHPAAPWPLGQGYPYQYPGPPPCFPPAYQDPGFSYGSGSTGSQQSEGSKSSGSTRNTLRPPACEKERRAAGSGDSDSESDHTAPSGVGSSWRERPADQLSRGSSPRSQASSYAPGLPPPHPTTKAYTVVGGPPGGPPVRELAAVPPELTGSRQSFQKAMGNPCEFFVDIM</sequence>
<organism>
    <name type="scientific">Homo sapiens</name>
    <name type="common">Human</name>
    <dbReference type="NCBI Taxonomy" id="9606"/>
    <lineage>
        <taxon>Eukaryota</taxon>
        <taxon>Metazoa</taxon>
        <taxon>Chordata</taxon>
        <taxon>Craniata</taxon>
        <taxon>Vertebrata</taxon>
        <taxon>Euteleostomi</taxon>
        <taxon>Mammalia</taxon>
        <taxon>Eutheria</taxon>
        <taxon>Euarchontoglires</taxon>
        <taxon>Primates</taxon>
        <taxon>Haplorrhini</taxon>
        <taxon>Catarrhini</taxon>
        <taxon>Hominidae</taxon>
        <taxon>Homo</taxon>
    </lineage>
</organism>
<gene>
    <name type="primary">DVL1P1</name>
    <name type="synonym">DVL</name>
    <name type="synonym">DVL1</name>
    <name type="synonym">DVL1L1</name>
</gene>
<proteinExistence type="uncertain"/>
<dbReference type="EMBL" id="U46461">
    <property type="protein sequence ID" value="AAC50682.1"/>
    <property type="molecule type" value="mRNA"/>
</dbReference>
<dbReference type="SMR" id="P54792"/>
<dbReference type="FunCoup" id="P54792">
    <property type="interactions" value="529"/>
</dbReference>
<dbReference type="IntAct" id="P54792">
    <property type="interactions" value="9"/>
</dbReference>
<dbReference type="MINT" id="P54792"/>
<dbReference type="iPTMnet" id="P54792"/>
<dbReference type="PhosphoSitePlus" id="P54792"/>
<dbReference type="BioMuta" id="HGNC:3085"/>
<dbReference type="DMDM" id="1706528"/>
<dbReference type="jPOST" id="P54792"/>
<dbReference type="MassIVE" id="P54792"/>
<dbReference type="PeptideAtlas" id="P54792"/>
<dbReference type="Pumba" id="P54792"/>
<dbReference type="AGR" id="HGNC:3085"/>
<dbReference type="GeneCards" id="DVL1P1"/>
<dbReference type="HGNC" id="HGNC:3085">
    <property type="gene designation" value="DVL1P1"/>
</dbReference>
<dbReference type="MIM" id="601225">
    <property type="type" value="gene"/>
</dbReference>
<dbReference type="neXtProt" id="NX_P54792"/>
<dbReference type="InParanoid" id="P54792"/>
<dbReference type="PAN-GO" id="P54792">
    <property type="GO annotations" value="4 GO annotations based on evolutionary models"/>
</dbReference>
<dbReference type="PathwayCommons" id="P54792"/>
<dbReference type="SignaLink" id="P54792"/>
<dbReference type="SIGNOR" id="P54792"/>
<dbReference type="Pharos" id="P54792">
    <property type="development level" value="Tdark"/>
</dbReference>
<dbReference type="PRO" id="PR:P54792"/>
<dbReference type="Proteomes" id="UP000005640">
    <property type="component" value="Unplaced"/>
</dbReference>
<dbReference type="RNAct" id="P54792">
    <property type="molecule type" value="protein"/>
</dbReference>
<dbReference type="GO" id="GO:0005829">
    <property type="term" value="C:cytosol"/>
    <property type="evidence" value="ECO:0000318"/>
    <property type="project" value="GO_Central"/>
</dbReference>
<dbReference type="GO" id="GO:0005109">
    <property type="term" value="F:frizzled binding"/>
    <property type="evidence" value="ECO:0000318"/>
    <property type="project" value="GO_Central"/>
</dbReference>
<dbReference type="GO" id="GO:0060070">
    <property type="term" value="P:canonical Wnt signaling pathway"/>
    <property type="evidence" value="ECO:0000318"/>
    <property type="project" value="GO_Central"/>
</dbReference>
<dbReference type="GO" id="GO:0007507">
    <property type="term" value="P:heart development"/>
    <property type="evidence" value="ECO:0000303"/>
    <property type="project" value="BHF-UCL"/>
</dbReference>
<dbReference type="GO" id="GO:0035556">
    <property type="term" value="P:intracellular signal transduction"/>
    <property type="evidence" value="ECO:0007669"/>
    <property type="project" value="InterPro"/>
</dbReference>
<dbReference type="CDD" id="cd04438">
    <property type="entry name" value="DEP_dishevelled"/>
    <property type="match status" value="1"/>
</dbReference>
<dbReference type="CDD" id="cd06717">
    <property type="entry name" value="PDZ_Dishevelled-like"/>
    <property type="match status" value="1"/>
</dbReference>
<dbReference type="FunFam" id="2.40.240.130:FF:000001">
    <property type="entry name" value="Segment polarity protein dishevelled homolog DVL-1"/>
    <property type="match status" value="1"/>
</dbReference>
<dbReference type="FunFam" id="2.30.42.10:FF:000014">
    <property type="entry name" value="Segment polarity protein dishevelled homolog DVL-3"/>
    <property type="match status" value="1"/>
</dbReference>
<dbReference type="FunFam" id="1.10.10.10:FF:000040">
    <property type="entry name" value="segment polarity protein dishevelled homolog DVL-3"/>
    <property type="match status" value="1"/>
</dbReference>
<dbReference type="Gene3D" id="2.30.42.10">
    <property type="match status" value="1"/>
</dbReference>
<dbReference type="Gene3D" id="2.40.240.130">
    <property type="match status" value="1"/>
</dbReference>
<dbReference type="Gene3D" id="1.10.10.10">
    <property type="entry name" value="Winged helix-like DNA-binding domain superfamily/Winged helix DNA-binding domain"/>
    <property type="match status" value="1"/>
</dbReference>
<dbReference type="InterPro" id="IPR000591">
    <property type="entry name" value="DEP_dom"/>
</dbReference>
<dbReference type="InterPro" id="IPR024580">
    <property type="entry name" value="Dishevelled_C-dom"/>
</dbReference>
<dbReference type="InterPro" id="IPR008339">
    <property type="entry name" value="Dishevelled_fam"/>
</dbReference>
<dbReference type="InterPro" id="IPR003351">
    <property type="entry name" value="Dishevelled_protein_dom"/>
</dbReference>
<dbReference type="InterPro" id="IPR001158">
    <property type="entry name" value="DIX"/>
</dbReference>
<dbReference type="InterPro" id="IPR038207">
    <property type="entry name" value="DIX_dom_sf"/>
</dbReference>
<dbReference type="InterPro" id="IPR015506">
    <property type="entry name" value="Dsh/Dvl-rel"/>
</dbReference>
<dbReference type="InterPro" id="IPR001478">
    <property type="entry name" value="PDZ"/>
</dbReference>
<dbReference type="InterPro" id="IPR036034">
    <property type="entry name" value="PDZ_sf"/>
</dbReference>
<dbReference type="InterPro" id="IPR029071">
    <property type="entry name" value="Ubiquitin-like_domsf"/>
</dbReference>
<dbReference type="InterPro" id="IPR036388">
    <property type="entry name" value="WH-like_DNA-bd_sf"/>
</dbReference>
<dbReference type="InterPro" id="IPR036390">
    <property type="entry name" value="WH_DNA-bd_sf"/>
</dbReference>
<dbReference type="PANTHER" id="PTHR10878">
    <property type="entry name" value="SEGMENT POLARITY PROTEIN DISHEVELLED"/>
    <property type="match status" value="1"/>
</dbReference>
<dbReference type="PANTHER" id="PTHR10878:SF5">
    <property type="entry name" value="SEGMENT POLARITY PROTEIN DISHEVELLED HOMOLOG DVL-1-RELATED"/>
    <property type="match status" value="1"/>
</dbReference>
<dbReference type="Pfam" id="PF00610">
    <property type="entry name" value="DEP"/>
    <property type="match status" value="1"/>
</dbReference>
<dbReference type="Pfam" id="PF02377">
    <property type="entry name" value="Dishevelled"/>
    <property type="match status" value="1"/>
</dbReference>
<dbReference type="Pfam" id="PF00778">
    <property type="entry name" value="DIX"/>
    <property type="match status" value="1"/>
</dbReference>
<dbReference type="Pfam" id="PF12316">
    <property type="entry name" value="Dsh_C"/>
    <property type="match status" value="1"/>
</dbReference>
<dbReference type="Pfam" id="PF00595">
    <property type="entry name" value="PDZ"/>
    <property type="match status" value="1"/>
</dbReference>
<dbReference type="PRINTS" id="PR01760">
    <property type="entry name" value="DISHEVELLED"/>
</dbReference>
<dbReference type="PRINTS" id="PR01761">
    <property type="entry name" value="DISHEVELLED1"/>
</dbReference>
<dbReference type="SMART" id="SM00021">
    <property type="entry name" value="DAX"/>
    <property type="match status" value="1"/>
</dbReference>
<dbReference type="SMART" id="SM00049">
    <property type="entry name" value="DEP"/>
    <property type="match status" value="1"/>
</dbReference>
<dbReference type="SMART" id="SM00228">
    <property type="entry name" value="PDZ"/>
    <property type="match status" value="1"/>
</dbReference>
<dbReference type="SUPFAM" id="SSF50156">
    <property type="entry name" value="PDZ domain-like"/>
    <property type="match status" value="1"/>
</dbReference>
<dbReference type="SUPFAM" id="SSF54236">
    <property type="entry name" value="Ubiquitin-like"/>
    <property type="match status" value="1"/>
</dbReference>
<dbReference type="SUPFAM" id="SSF46785">
    <property type="entry name" value="Winged helix' DNA-binding domain"/>
    <property type="match status" value="1"/>
</dbReference>
<dbReference type="PROSITE" id="PS50186">
    <property type="entry name" value="DEP"/>
    <property type="match status" value="1"/>
</dbReference>
<dbReference type="PROSITE" id="PS50841">
    <property type="entry name" value="DIX"/>
    <property type="match status" value="1"/>
</dbReference>
<dbReference type="PROSITE" id="PS50106">
    <property type="entry name" value="PDZ"/>
    <property type="match status" value="1"/>
</dbReference>
<comment type="function">
    <text>May play a role in the signal transduction pathway mediated by multiple Wnt genes.</text>
</comment>
<comment type="interaction">
    <interactant intactId="EBI-7848109">
        <id>P54792</id>
    </interactant>
    <interactant intactId="EBI-727707">
        <id>P25054</id>
        <label>APC</label>
    </interactant>
    <organismsDiffer>false</organismsDiffer>
    <experiments>2</experiments>
</comment>
<comment type="subcellular location">
    <subcellularLocation>
        <location evidence="7">Cytoplasm</location>
    </subcellularLocation>
</comment>
<comment type="alternative products">
    <event type="alternative splicing"/>
    <isoform>
        <id>P54792-1</id>
        <name>Long</name>
        <sequence type="displayed"/>
    </isoform>
    <isoform>
        <id>P54792-2</id>
        <name>Short</name>
        <sequence type="described" ref="VSP_001320"/>
    </isoform>
</comment>
<comment type="tissue specificity">
    <text evidence="5">Expressed in thymus, heart, liver, kidney, brain, skeletal muscle, and pancreas.</text>
</comment>
<comment type="miscellaneous">
    <text>Part of that gene may be located in interstitial deletions of chromosome 22 associated with DiGeorge syndrome (DGS).</text>
</comment>
<comment type="similarity">
    <text evidence="7">Belongs to the DSH family.</text>
</comment>
<comment type="caution">
    <text evidence="8">Product of a dubious gene prediction. Pizzuti et al (PubMed:8644734) identified this gene on chromosome 22, however it is not currently present in the reference genome assembly (GRCh37/hg19).</text>
</comment>
<feature type="chain" id="PRO_0000145741" description="Putative segment polarity protein dishevelled homolog DVL1P1">
    <location>
        <begin position="1"/>
        <end position="670"/>
    </location>
</feature>
<feature type="domain" description="DIX" evidence="2">
    <location>
        <begin position="1"/>
        <end position="85"/>
    </location>
</feature>
<feature type="domain" description="PDZ" evidence="3">
    <location>
        <begin position="251"/>
        <end position="323"/>
    </location>
</feature>
<feature type="domain" description="DEP" evidence="1">
    <location>
        <begin position="400"/>
        <end position="474"/>
    </location>
</feature>
<feature type="region of interest" description="Disordered" evidence="4">
    <location>
        <begin position="89"/>
        <end position="240"/>
    </location>
</feature>
<feature type="region of interest" description="Disordered" evidence="4">
    <location>
        <begin position="518"/>
        <end position="642"/>
    </location>
</feature>
<feature type="compositionally biased region" description="Basic residues" evidence="4">
    <location>
        <begin position="142"/>
        <end position="151"/>
    </location>
</feature>
<feature type="compositionally biased region" description="Basic and acidic residues" evidence="4">
    <location>
        <begin position="152"/>
        <end position="171"/>
    </location>
</feature>
<feature type="compositionally biased region" description="Low complexity" evidence="4">
    <location>
        <begin position="176"/>
        <end position="192"/>
    </location>
</feature>
<feature type="compositionally biased region" description="Low complexity" evidence="4">
    <location>
        <begin position="201"/>
        <end position="214"/>
    </location>
</feature>
<feature type="compositionally biased region" description="Basic residues" evidence="4">
    <location>
        <begin position="215"/>
        <end position="228"/>
    </location>
</feature>
<feature type="compositionally biased region" description="Low complexity" evidence="4">
    <location>
        <begin position="526"/>
        <end position="553"/>
    </location>
</feature>
<feature type="compositionally biased region" description="Low complexity" evidence="4">
    <location>
        <begin position="600"/>
        <end position="614"/>
    </location>
</feature>
<feature type="splice variant" id="VSP_001320" description="In isoform Short." evidence="6">
    <location>
        <begin position="479"/>
        <end position="486"/>
    </location>
</feature>